<name>CLC4K_MOUSE</name>
<accession>Q8VBX4</accession>
<accession>Q8R442</accession>
<feature type="chain" id="PRO_0000223694" description="C-type lectin domain family 4 member K">
    <location>
        <begin position="1"/>
        <end position="331"/>
    </location>
</feature>
<feature type="topological domain" description="Cytoplasmic" evidence="2">
    <location>
        <begin position="1"/>
        <end position="41"/>
    </location>
</feature>
<feature type="transmembrane region" description="Helical; Signal-anchor for type II membrane protein" evidence="2">
    <location>
        <begin position="42"/>
        <end position="62"/>
    </location>
</feature>
<feature type="topological domain" description="Extracellular" evidence="2">
    <location>
        <begin position="63"/>
        <end position="331"/>
    </location>
</feature>
<feature type="domain" description="C-type lectin" evidence="3">
    <location>
        <begin position="205"/>
        <end position="323"/>
    </location>
</feature>
<feature type="coiled-coil region" evidence="2">
    <location>
        <begin position="106"/>
        <end position="197"/>
    </location>
</feature>
<feature type="glycosylation site" description="N-linked (GlcNAc...) asparagine" evidence="2">
    <location>
        <position position="90"/>
    </location>
</feature>
<feature type="glycosylation site" description="N-linked (GlcNAc...) asparagine" evidence="2">
    <location>
        <position position="116"/>
    </location>
</feature>
<feature type="disulfide bond" evidence="3">
    <location>
        <begin position="226"/>
        <end position="322"/>
    </location>
</feature>
<feature type="disulfide bond" evidence="3">
    <location>
        <begin position="298"/>
        <end position="314"/>
    </location>
</feature>
<feature type="sequence conflict" description="In Ref. 3; AAL83701." evidence="6" ref="3">
    <original>V</original>
    <variation>A</variation>
    <location>
        <position position="105"/>
    </location>
</feature>
<feature type="helix" evidence="7">
    <location>
        <begin position="194"/>
        <end position="198"/>
    </location>
</feature>
<feature type="turn" evidence="7">
    <location>
        <begin position="199"/>
        <end position="201"/>
    </location>
</feature>
<feature type="strand" evidence="7">
    <location>
        <begin position="203"/>
        <end position="205"/>
    </location>
</feature>
<feature type="strand" evidence="7">
    <location>
        <begin position="208"/>
        <end position="212"/>
    </location>
</feature>
<feature type="helix" evidence="7">
    <location>
        <begin position="219"/>
        <end position="228"/>
    </location>
</feature>
<feature type="helix" evidence="7">
    <location>
        <begin position="239"/>
        <end position="248"/>
    </location>
</feature>
<feature type="turn" evidence="7">
    <location>
        <begin position="249"/>
        <end position="251"/>
    </location>
</feature>
<feature type="strand" evidence="7">
    <location>
        <begin position="254"/>
        <end position="262"/>
    </location>
</feature>
<feature type="strand" evidence="7">
    <location>
        <begin position="267"/>
        <end position="269"/>
    </location>
</feature>
<feature type="helix" evidence="7">
    <location>
        <begin position="277"/>
        <end position="280"/>
    </location>
</feature>
<feature type="turn" evidence="7">
    <location>
        <begin position="281"/>
        <end position="283"/>
    </location>
</feature>
<feature type="helix" evidence="7">
    <location>
        <begin position="292"/>
        <end position="294"/>
    </location>
</feature>
<feature type="strand" evidence="7">
    <location>
        <begin position="298"/>
        <end position="301"/>
    </location>
</feature>
<feature type="strand" evidence="7">
    <location>
        <begin position="303"/>
        <end position="307"/>
    </location>
</feature>
<feature type="strand" evidence="7">
    <location>
        <begin position="309"/>
        <end position="312"/>
    </location>
</feature>
<feature type="strand" evidence="7">
    <location>
        <begin position="318"/>
        <end position="325"/>
    </location>
</feature>
<keyword id="KW-0002">3D-structure</keyword>
<keyword id="KW-0175">Coiled coil</keyword>
<keyword id="KW-1015">Disulfide bond</keyword>
<keyword id="KW-0325">Glycoprotein</keyword>
<keyword id="KW-0430">Lectin</keyword>
<keyword id="KW-0472">Membrane</keyword>
<keyword id="KW-1185">Reference proteome</keyword>
<keyword id="KW-0735">Signal-anchor</keyword>
<keyword id="KW-0812">Transmembrane</keyword>
<keyword id="KW-1133">Transmembrane helix</keyword>
<proteinExistence type="evidence at protein level"/>
<protein>
    <recommendedName>
        <fullName>C-type lectin domain family 4 member K</fullName>
    </recommendedName>
    <alternativeName>
        <fullName>Langerin</fullName>
    </alternativeName>
    <cdAntigenName>CD207</cdAntigenName>
</protein>
<comment type="function">
    <text evidence="4 5">Calcium-dependent lectin displaying mannose-binding specificity. Induces the formation of Birbeck granules (BGs); is a potent regulator of membrane superimposition and zippering. Binds to sulfated as well as mannosylated glycans, keratan sulfate (KS) and beta-glucans. Facilitates uptake of antigens and is involved in the routing and/or processing of antigen for presentation to T cells.</text>
</comment>
<comment type="subunit">
    <text evidence="1">Homotrimer.</text>
</comment>
<comment type="subcellular location">
    <subcellularLocation>
        <location>Membrane</location>
        <topology>Single-pass type II membrane protein</topology>
    </subcellularLocation>
    <text evidence="1">Found in Birbeck granules (BGs), which are organelles consisting of superimposed and zippered membranes.</text>
</comment>
<comment type="tissue specificity">
    <text evidence="4">Expressed by Langerhans cells. Expressed in dendritic cells and by scattered cells in lymph nodes and spleen. Also detected in some non-lymphoid tissues such as lung, liver and heart.</text>
</comment>
<comment type="domain">
    <text evidence="1">The C-type lectin domain mediates dual recognition of both sulfated and mannosylated glycans.</text>
</comment>
<comment type="online information" name="Functional Glycomics Gateway - Glycan Binding">
    <link uri="http://www.functionalglycomics.org/glycomics/GBPServlet?&amp;operationType=view&amp;cbpId=cbp_mou_Ctlect_360"/>
    <text>Langerin</text>
</comment>
<organism>
    <name type="scientific">Mus musculus</name>
    <name type="common">Mouse</name>
    <dbReference type="NCBI Taxonomy" id="10090"/>
    <lineage>
        <taxon>Eukaryota</taxon>
        <taxon>Metazoa</taxon>
        <taxon>Chordata</taxon>
        <taxon>Craniata</taxon>
        <taxon>Vertebrata</taxon>
        <taxon>Euteleostomi</taxon>
        <taxon>Mammalia</taxon>
        <taxon>Eutheria</taxon>
        <taxon>Euarchontoglires</taxon>
        <taxon>Glires</taxon>
        <taxon>Rodentia</taxon>
        <taxon>Myomorpha</taxon>
        <taxon>Muroidea</taxon>
        <taxon>Muridae</taxon>
        <taxon>Murinae</taxon>
        <taxon>Mus</taxon>
        <taxon>Mus</taxon>
    </lineage>
</organism>
<reference key="1">
    <citation type="journal article" date="2002" name="J. Immunol.">
        <title>Identification of mouse langerin/CD207 in Langerhans cells and some dendritic cells of lymphoid tissues.</title>
        <authorList>
            <person name="Valladeau J."/>
            <person name="Clair-Moninot V."/>
            <person name="Dezutter-Dambuyant C."/>
            <person name="Pin J.-J."/>
            <person name="Kissenpfennig A."/>
            <person name="Mattei M.-G."/>
            <person name="Ait-Yahia S."/>
            <person name="Bates E.E.M."/>
            <person name="Malissen B."/>
            <person name="Koch F."/>
            <person name="Fossiez F."/>
            <person name="Romani N."/>
            <person name="Lebecque S."/>
            <person name="Saeland S."/>
        </authorList>
    </citation>
    <scope>NUCLEOTIDE SEQUENCE [MRNA]</scope>
    <scope>FUNCTION</scope>
    <scope>TISSUE SPECIFICITY</scope>
    <source>
        <tissue>Lung</tissue>
    </source>
</reference>
<reference key="2">
    <citation type="submission" date="2001-01" db="EMBL/GenBank/DDBJ databases">
        <title>Mouse langerin homologue: identification, expression pattern, and chromosomal mapping of the cognate mouse and rat gene.</title>
        <authorList>
            <person name="Takahara K."/>
            <person name="Omatsu Y."/>
            <person name="Umemoto E."/>
            <person name="Yashima Y."/>
            <person name="Matsubara K."/>
            <person name="Shimoyama S."/>
            <person name="Iyoda T."/>
            <person name="Matsuda Y."/>
            <person name="Inaba K."/>
        </authorList>
    </citation>
    <scope>NUCLEOTIDE SEQUENCE [MRNA]</scope>
    <source>
        <strain>F1</strain>
    </source>
</reference>
<reference key="3">
    <citation type="submission" date="2002-02" db="EMBL/GenBank/DDBJ databases">
        <title>Cloning of mouse Langerin from fetal skin-derived dendritic cells.</title>
        <authorList>
            <person name="Riedl E."/>
            <person name="Wilson M."/>
            <person name="Udey M.C."/>
        </authorList>
    </citation>
    <scope>NUCLEOTIDE SEQUENCE [MRNA]</scope>
    <source>
        <strain>C57BL/6J</strain>
    </source>
</reference>
<reference key="4">
    <citation type="journal article" date="2005" name="Science">
        <title>The transcriptional landscape of the mammalian genome.</title>
        <authorList>
            <person name="Carninci P."/>
            <person name="Kasukawa T."/>
            <person name="Katayama S."/>
            <person name="Gough J."/>
            <person name="Frith M.C."/>
            <person name="Maeda N."/>
            <person name="Oyama R."/>
            <person name="Ravasi T."/>
            <person name="Lenhard B."/>
            <person name="Wells C."/>
            <person name="Kodzius R."/>
            <person name="Shimokawa K."/>
            <person name="Bajic V.B."/>
            <person name="Brenner S.E."/>
            <person name="Batalov S."/>
            <person name="Forrest A.R."/>
            <person name="Zavolan M."/>
            <person name="Davis M.J."/>
            <person name="Wilming L.G."/>
            <person name="Aidinis V."/>
            <person name="Allen J.E."/>
            <person name="Ambesi-Impiombato A."/>
            <person name="Apweiler R."/>
            <person name="Aturaliya R.N."/>
            <person name="Bailey T.L."/>
            <person name="Bansal M."/>
            <person name="Baxter L."/>
            <person name="Beisel K.W."/>
            <person name="Bersano T."/>
            <person name="Bono H."/>
            <person name="Chalk A.M."/>
            <person name="Chiu K.P."/>
            <person name="Choudhary V."/>
            <person name="Christoffels A."/>
            <person name="Clutterbuck D.R."/>
            <person name="Crowe M.L."/>
            <person name="Dalla E."/>
            <person name="Dalrymple B.P."/>
            <person name="de Bono B."/>
            <person name="Della Gatta G."/>
            <person name="di Bernardo D."/>
            <person name="Down T."/>
            <person name="Engstrom P."/>
            <person name="Fagiolini M."/>
            <person name="Faulkner G."/>
            <person name="Fletcher C.F."/>
            <person name="Fukushima T."/>
            <person name="Furuno M."/>
            <person name="Futaki S."/>
            <person name="Gariboldi M."/>
            <person name="Georgii-Hemming P."/>
            <person name="Gingeras T.R."/>
            <person name="Gojobori T."/>
            <person name="Green R.E."/>
            <person name="Gustincich S."/>
            <person name="Harbers M."/>
            <person name="Hayashi Y."/>
            <person name="Hensch T.K."/>
            <person name="Hirokawa N."/>
            <person name="Hill D."/>
            <person name="Huminiecki L."/>
            <person name="Iacono M."/>
            <person name="Ikeo K."/>
            <person name="Iwama A."/>
            <person name="Ishikawa T."/>
            <person name="Jakt M."/>
            <person name="Kanapin A."/>
            <person name="Katoh M."/>
            <person name="Kawasawa Y."/>
            <person name="Kelso J."/>
            <person name="Kitamura H."/>
            <person name="Kitano H."/>
            <person name="Kollias G."/>
            <person name="Krishnan S.P."/>
            <person name="Kruger A."/>
            <person name="Kummerfeld S.K."/>
            <person name="Kurochkin I.V."/>
            <person name="Lareau L.F."/>
            <person name="Lazarevic D."/>
            <person name="Lipovich L."/>
            <person name="Liu J."/>
            <person name="Liuni S."/>
            <person name="McWilliam S."/>
            <person name="Madan Babu M."/>
            <person name="Madera M."/>
            <person name="Marchionni L."/>
            <person name="Matsuda H."/>
            <person name="Matsuzawa S."/>
            <person name="Miki H."/>
            <person name="Mignone F."/>
            <person name="Miyake S."/>
            <person name="Morris K."/>
            <person name="Mottagui-Tabar S."/>
            <person name="Mulder N."/>
            <person name="Nakano N."/>
            <person name="Nakauchi H."/>
            <person name="Ng P."/>
            <person name="Nilsson R."/>
            <person name="Nishiguchi S."/>
            <person name="Nishikawa S."/>
            <person name="Nori F."/>
            <person name="Ohara O."/>
            <person name="Okazaki Y."/>
            <person name="Orlando V."/>
            <person name="Pang K.C."/>
            <person name="Pavan W.J."/>
            <person name="Pavesi G."/>
            <person name="Pesole G."/>
            <person name="Petrovsky N."/>
            <person name="Piazza S."/>
            <person name="Reed J."/>
            <person name="Reid J.F."/>
            <person name="Ring B.Z."/>
            <person name="Ringwald M."/>
            <person name="Rost B."/>
            <person name="Ruan Y."/>
            <person name="Salzberg S.L."/>
            <person name="Sandelin A."/>
            <person name="Schneider C."/>
            <person name="Schoenbach C."/>
            <person name="Sekiguchi K."/>
            <person name="Semple C.A."/>
            <person name="Seno S."/>
            <person name="Sessa L."/>
            <person name="Sheng Y."/>
            <person name="Shibata Y."/>
            <person name="Shimada H."/>
            <person name="Shimada K."/>
            <person name="Silva D."/>
            <person name="Sinclair B."/>
            <person name="Sperling S."/>
            <person name="Stupka E."/>
            <person name="Sugiura K."/>
            <person name="Sultana R."/>
            <person name="Takenaka Y."/>
            <person name="Taki K."/>
            <person name="Tammoja K."/>
            <person name="Tan S.L."/>
            <person name="Tang S."/>
            <person name="Taylor M.S."/>
            <person name="Tegner J."/>
            <person name="Teichmann S.A."/>
            <person name="Ueda H.R."/>
            <person name="van Nimwegen E."/>
            <person name="Verardo R."/>
            <person name="Wei C.L."/>
            <person name="Yagi K."/>
            <person name="Yamanishi H."/>
            <person name="Zabarovsky E."/>
            <person name="Zhu S."/>
            <person name="Zimmer A."/>
            <person name="Hide W."/>
            <person name="Bult C."/>
            <person name="Grimmond S.M."/>
            <person name="Teasdale R.D."/>
            <person name="Liu E.T."/>
            <person name="Brusic V."/>
            <person name="Quackenbush J."/>
            <person name="Wahlestedt C."/>
            <person name="Mattick J.S."/>
            <person name="Hume D.A."/>
            <person name="Kai C."/>
            <person name="Sasaki D."/>
            <person name="Tomaru Y."/>
            <person name="Fukuda S."/>
            <person name="Kanamori-Katayama M."/>
            <person name="Suzuki M."/>
            <person name="Aoki J."/>
            <person name="Arakawa T."/>
            <person name="Iida J."/>
            <person name="Imamura K."/>
            <person name="Itoh M."/>
            <person name="Kato T."/>
            <person name="Kawaji H."/>
            <person name="Kawagashira N."/>
            <person name="Kawashima T."/>
            <person name="Kojima M."/>
            <person name="Kondo S."/>
            <person name="Konno H."/>
            <person name="Nakano K."/>
            <person name="Ninomiya N."/>
            <person name="Nishio T."/>
            <person name="Okada M."/>
            <person name="Plessy C."/>
            <person name="Shibata K."/>
            <person name="Shiraki T."/>
            <person name="Suzuki S."/>
            <person name="Tagami M."/>
            <person name="Waki K."/>
            <person name="Watahiki A."/>
            <person name="Okamura-Oho Y."/>
            <person name="Suzuki H."/>
            <person name="Kawai J."/>
            <person name="Hayashizaki Y."/>
        </authorList>
    </citation>
    <scope>NUCLEOTIDE SEQUENCE [LARGE SCALE MRNA]</scope>
    <source>
        <strain>C57BL/6J</strain>
        <tissue>Heart</tissue>
    </source>
</reference>
<reference key="5">
    <citation type="journal article" date="2008" name="J. Immunol.">
        <title>Langerin/CD207 receptor on dendritic cells mediates efficient antigen presentation on MHC I and II products in vivo.</title>
        <authorList>
            <person name="Idoyaga J."/>
            <person name="Cheong C."/>
            <person name="Suda K."/>
            <person name="Suda N."/>
            <person name="Kim J.Y."/>
            <person name="Lee H."/>
            <person name="Park C.G."/>
            <person name="Steinman R.M."/>
        </authorList>
    </citation>
    <scope>FUNCTION</scope>
</reference>
<evidence type="ECO:0000250" key="1"/>
<evidence type="ECO:0000255" key="2"/>
<evidence type="ECO:0000255" key="3">
    <source>
        <dbReference type="PROSITE-ProRule" id="PRU00040"/>
    </source>
</evidence>
<evidence type="ECO:0000269" key="4">
    <source>
    </source>
</evidence>
<evidence type="ECO:0000269" key="5">
    <source>
    </source>
</evidence>
<evidence type="ECO:0000305" key="6"/>
<evidence type="ECO:0007829" key="7">
    <source>
        <dbReference type="PDB" id="5M62"/>
    </source>
</evidence>
<sequence length="331" mass="37621">MPEAEMKEEAPEAHFTVDKQNISLWPREPPPKQDLSPVLRKPLCICVAFTCLALVLVTSIVLQAVFYPRLMGKILDVKSDAQMLKGRVDNISTLGSDLKTERGRVDDAEVQMQIVNTTLKRVRSQILSLETSMKIANDQLQILTMSWGEVDSLSAKIPELKRDLDKASALNTKVQGLQNSLENVNKLLKQQSDILEMVARGWKYFSGNFYYFSRTPKTWYSAEQFCISRKAHLTSVSSESEQKFLYKAADGIPHWIGLTKAGSEGDWYWVDQTSFNKEQSRRFWIPGEPNNAGNNEHCANIRVSALKCWNDGPCDNTFLFICKRPYVQTTE</sequence>
<dbReference type="EMBL" id="AJ302711">
    <property type="protein sequence ID" value="CAC82936.1"/>
    <property type="molecule type" value="mRNA"/>
</dbReference>
<dbReference type="EMBL" id="AY026050">
    <property type="protein sequence ID" value="AAK01952.1"/>
    <property type="molecule type" value="mRNA"/>
</dbReference>
<dbReference type="EMBL" id="AY078415">
    <property type="protein sequence ID" value="AAL83701.1"/>
    <property type="molecule type" value="mRNA"/>
</dbReference>
<dbReference type="EMBL" id="AK142731">
    <property type="protein sequence ID" value="BAE25177.1"/>
    <property type="molecule type" value="mRNA"/>
</dbReference>
<dbReference type="CCDS" id="CCDS39534.1"/>
<dbReference type="RefSeq" id="NP_659192.2">
    <property type="nucleotide sequence ID" value="NM_144943.3"/>
</dbReference>
<dbReference type="PDB" id="5K8Y">
    <property type="method" value="X-ray"/>
    <property type="resolution" value="2.40 A"/>
    <property type="chains" value="A/B=194-331"/>
</dbReference>
<dbReference type="PDB" id="5M62">
    <property type="method" value="X-ray"/>
    <property type="resolution" value="1.70 A"/>
    <property type="chains" value="A/B=194-331"/>
</dbReference>
<dbReference type="PDBsum" id="5K8Y"/>
<dbReference type="PDBsum" id="5M62"/>
<dbReference type="SMR" id="Q8VBX4"/>
<dbReference type="FunCoup" id="Q8VBX4">
    <property type="interactions" value="392"/>
</dbReference>
<dbReference type="STRING" id="10090.ENSMUSP00000040746"/>
<dbReference type="BindingDB" id="Q8VBX4"/>
<dbReference type="ChEMBL" id="CHEMBL5291547"/>
<dbReference type="UniLectin" id="Q8VBX4"/>
<dbReference type="GlyCosmos" id="Q8VBX4">
    <property type="glycosylation" value="2 sites, No reported glycans"/>
</dbReference>
<dbReference type="GlyGen" id="Q8VBX4">
    <property type="glycosylation" value="2 sites"/>
</dbReference>
<dbReference type="iPTMnet" id="Q8VBX4"/>
<dbReference type="PhosphoSitePlus" id="Q8VBX4"/>
<dbReference type="PaxDb" id="10090-ENSMUSP00000040746"/>
<dbReference type="ProteomicsDB" id="285470"/>
<dbReference type="ABCD" id="Q8VBX4">
    <property type="antibodies" value="3 sequenced antibodies"/>
</dbReference>
<dbReference type="Antibodypedia" id="2366">
    <property type="antibodies" value="573 antibodies from 36 providers"/>
</dbReference>
<dbReference type="DNASU" id="246278"/>
<dbReference type="Ensembl" id="ENSMUST00000037882.8">
    <property type="protein sequence ID" value="ENSMUSP00000040746.7"/>
    <property type="gene ID" value="ENSMUSG00000034783.8"/>
</dbReference>
<dbReference type="GeneID" id="246278"/>
<dbReference type="KEGG" id="mmu:246278"/>
<dbReference type="UCSC" id="uc009cnw.2">
    <property type="organism name" value="mouse"/>
</dbReference>
<dbReference type="AGR" id="MGI:2180021"/>
<dbReference type="CTD" id="50489"/>
<dbReference type="MGI" id="MGI:2180021">
    <property type="gene designation" value="Cd207"/>
</dbReference>
<dbReference type="VEuPathDB" id="HostDB:ENSMUSG00000034783"/>
<dbReference type="eggNOG" id="KOG4297">
    <property type="taxonomic scope" value="Eukaryota"/>
</dbReference>
<dbReference type="GeneTree" id="ENSGT00940000161863"/>
<dbReference type="HOGENOM" id="CLU_081746_0_0_1"/>
<dbReference type="InParanoid" id="Q8VBX4"/>
<dbReference type="OMA" id="WYSAEQF"/>
<dbReference type="OrthoDB" id="2142683at2759"/>
<dbReference type="PhylomeDB" id="Q8VBX4"/>
<dbReference type="TreeFam" id="TF333341"/>
<dbReference type="Reactome" id="R-MMU-1236978">
    <property type="pathway name" value="Cross-presentation of soluble exogenous antigens (endosomes)"/>
</dbReference>
<dbReference type="BioGRID-ORCS" id="246278">
    <property type="hits" value="1 hit in 78 CRISPR screens"/>
</dbReference>
<dbReference type="PRO" id="PR:Q8VBX4"/>
<dbReference type="Proteomes" id="UP000000589">
    <property type="component" value="Chromosome 6"/>
</dbReference>
<dbReference type="RNAct" id="Q8VBX4">
    <property type="molecule type" value="protein"/>
</dbReference>
<dbReference type="Bgee" id="ENSMUSG00000034783">
    <property type="expression patterns" value="Expressed in skin of external ear and 15 other cell types or tissues"/>
</dbReference>
<dbReference type="GO" id="GO:0005886">
    <property type="term" value="C:plasma membrane"/>
    <property type="evidence" value="ECO:0000250"/>
    <property type="project" value="MGI"/>
</dbReference>
<dbReference type="GO" id="GO:0030246">
    <property type="term" value="F:carbohydrate binding"/>
    <property type="evidence" value="ECO:0000314"/>
    <property type="project" value="MGI"/>
</dbReference>
<dbReference type="GO" id="GO:0051607">
    <property type="term" value="P:defense response to virus"/>
    <property type="evidence" value="ECO:0007669"/>
    <property type="project" value="Ensembl"/>
</dbReference>
<dbReference type="CDD" id="cd03590">
    <property type="entry name" value="CLECT_DC-SIGN_like"/>
    <property type="match status" value="1"/>
</dbReference>
<dbReference type="FunFam" id="3.10.100.10:FF:000115">
    <property type="entry name" value="C-type lectin domain family 4 member K"/>
    <property type="match status" value="1"/>
</dbReference>
<dbReference type="Gene3D" id="1.20.5.170">
    <property type="match status" value="1"/>
</dbReference>
<dbReference type="Gene3D" id="3.10.100.10">
    <property type="entry name" value="Mannose-Binding Protein A, subunit A"/>
    <property type="match status" value="1"/>
</dbReference>
<dbReference type="InterPro" id="IPR001304">
    <property type="entry name" value="C-type_lectin-like"/>
</dbReference>
<dbReference type="InterPro" id="IPR016186">
    <property type="entry name" value="C-type_lectin-like/link_sf"/>
</dbReference>
<dbReference type="InterPro" id="IPR050111">
    <property type="entry name" value="C-type_lectin/snaclec_domain"/>
</dbReference>
<dbReference type="InterPro" id="IPR018378">
    <property type="entry name" value="C-type_lectin_CS"/>
</dbReference>
<dbReference type="InterPro" id="IPR033989">
    <property type="entry name" value="CD209-like_CTLD"/>
</dbReference>
<dbReference type="InterPro" id="IPR016187">
    <property type="entry name" value="CTDL_fold"/>
</dbReference>
<dbReference type="PANTHER" id="PTHR22803">
    <property type="entry name" value="MANNOSE, PHOSPHOLIPASE, LECTIN RECEPTOR RELATED"/>
    <property type="match status" value="1"/>
</dbReference>
<dbReference type="Pfam" id="PF00059">
    <property type="entry name" value="Lectin_C"/>
    <property type="match status" value="1"/>
</dbReference>
<dbReference type="SMART" id="SM00034">
    <property type="entry name" value="CLECT"/>
    <property type="match status" value="1"/>
</dbReference>
<dbReference type="SUPFAM" id="SSF58100">
    <property type="entry name" value="Bacterial hemolysins"/>
    <property type="match status" value="1"/>
</dbReference>
<dbReference type="SUPFAM" id="SSF56436">
    <property type="entry name" value="C-type lectin-like"/>
    <property type="match status" value="1"/>
</dbReference>
<dbReference type="PROSITE" id="PS00615">
    <property type="entry name" value="C_TYPE_LECTIN_1"/>
    <property type="match status" value="1"/>
</dbReference>
<dbReference type="PROSITE" id="PS50041">
    <property type="entry name" value="C_TYPE_LECTIN_2"/>
    <property type="match status" value="1"/>
</dbReference>
<gene>
    <name type="primary">Cd207</name>
    <name type="synonym">Clec4k</name>
</gene>